<comment type="function">
    <text evidence="1">Mnh complex is a Na(+)/H(+) antiporter involved in Na(+) excretion.</text>
</comment>
<comment type="subunit">
    <text evidence="1">May form a heterooligomeric complex that consists of seven subunits: mnhA1, mnhB1, mnhC1, mnhD1, mnhE1, mnhF1 and mnhG1.</text>
</comment>
<comment type="subcellular location">
    <subcellularLocation>
        <location evidence="3">Cell membrane</location>
        <topology evidence="3">Multi-pass membrane protein</topology>
    </subcellularLocation>
</comment>
<comment type="similarity">
    <text evidence="3">Belongs to the CPA3 antiporters (TC 2.A.63) subunit F family.</text>
</comment>
<evidence type="ECO:0000250" key="1"/>
<evidence type="ECO:0000255" key="2"/>
<evidence type="ECO:0000305" key="3"/>
<accession>A7X0F7</accession>
<organism>
    <name type="scientific">Staphylococcus aureus (strain Mu3 / ATCC 700698)</name>
    <dbReference type="NCBI Taxonomy" id="418127"/>
    <lineage>
        <taxon>Bacteria</taxon>
        <taxon>Bacillati</taxon>
        <taxon>Bacillota</taxon>
        <taxon>Bacilli</taxon>
        <taxon>Bacillales</taxon>
        <taxon>Staphylococcaceae</taxon>
        <taxon>Staphylococcus</taxon>
    </lineage>
</organism>
<sequence length="97" mass="10616">MNHNVIIVIALIIVVISMLAMLIRVVLGPSLADRVVALDAIGLQLMAVIALFSILLNIKYMIVVIMMIGILAFLGTAVFSKFMDKGKVIEHDQNHTD</sequence>
<reference key="1">
    <citation type="journal article" date="2008" name="Antimicrob. Agents Chemother.">
        <title>Mutated response regulator graR is responsible for phenotypic conversion of Staphylococcus aureus from heterogeneous vancomycin-intermediate resistance to vancomycin-intermediate resistance.</title>
        <authorList>
            <person name="Neoh H.-M."/>
            <person name="Cui L."/>
            <person name="Yuzawa H."/>
            <person name="Takeuchi F."/>
            <person name="Matsuo M."/>
            <person name="Hiramatsu K."/>
        </authorList>
    </citation>
    <scope>NUCLEOTIDE SEQUENCE [LARGE SCALE GENOMIC DNA]</scope>
    <source>
        <strain>Mu3 / ATCC 700698</strain>
    </source>
</reference>
<proteinExistence type="inferred from homology"/>
<keyword id="KW-0050">Antiport</keyword>
<keyword id="KW-1003">Cell membrane</keyword>
<keyword id="KW-0375">Hydrogen ion transport</keyword>
<keyword id="KW-0406">Ion transport</keyword>
<keyword id="KW-0472">Membrane</keyword>
<keyword id="KW-0915">Sodium</keyword>
<keyword id="KW-0739">Sodium transport</keyword>
<keyword id="KW-0812">Transmembrane</keyword>
<keyword id="KW-1133">Transmembrane helix</keyword>
<keyword id="KW-0813">Transport</keyword>
<dbReference type="EMBL" id="AP009324">
    <property type="protein sequence ID" value="BAF77825.1"/>
    <property type="molecule type" value="Genomic_DNA"/>
</dbReference>
<dbReference type="RefSeq" id="WP_001016306.1">
    <property type="nucleotide sequence ID" value="NZ_CTYB01000024.1"/>
</dbReference>
<dbReference type="SMR" id="A7X0F7"/>
<dbReference type="KEGG" id="saw:SAHV_0942"/>
<dbReference type="HOGENOM" id="CLU_125825_1_3_9"/>
<dbReference type="GO" id="GO:0005886">
    <property type="term" value="C:plasma membrane"/>
    <property type="evidence" value="ECO:0007669"/>
    <property type="project" value="UniProtKB-SubCell"/>
</dbReference>
<dbReference type="GO" id="GO:0015385">
    <property type="term" value="F:sodium:proton antiporter activity"/>
    <property type="evidence" value="ECO:0007669"/>
    <property type="project" value="TreeGrafter"/>
</dbReference>
<dbReference type="InterPro" id="IPR007208">
    <property type="entry name" value="MrpF/PhaF-like"/>
</dbReference>
<dbReference type="NCBIfam" id="NF009248">
    <property type="entry name" value="PRK12600.1"/>
    <property type="match status" value="1"/>
</dbReference>
<dbReference type="PANTHER" id="PTHR34702">
    <property type="entry name" value="NA(+)/H(+) ANTIPORTER SUBUNIT F1"/>
    <property type="match status" value="1"/>
</dbReference>
<dbReference type="PANTHER" id="PTHR34702:SF1">
    <property type="entry name" value="NA(+)_H(+) ANTIPORTER SUBUNIT F"/>
    <property type="match status" value="1"/>
</dbReference>
<dbReference type="Pfam" id="PF04066">
    <property type="entry name" value="MrpF_PhaF"/>
    <property type="match status" value="1"/>
</dbReference>
<dbReference type="PIRSF" id="PIRSF028784">
    <property type="entry name" value="MrpF"/>
    <property type="match status" value="1"/>
</dbReference>
<name>MNHF1_STAA1</name>
<feature type="chain" id="PRO_0000372154" description="Na(+)/H(+) antiporter subunit F1">
    <location>
        <begin position="1"/>
        <end position="97"/>
    </location>
</feature>
<feature type="transmembrane region" description="Helical" evidence="2">
    <location>
        <begin position="3"/>
        <end position="23"/>
    </location>
</feature>
<feature type="transmembrane region" description="Helical" evidence="2">
    <location>
        <begin position="35"/>
        <end position="55"/>
    </location>
</feature>
<feature type="transmembrane region" description="Helical" evidence="2">
    <location>
        <begin position="60"/>
        <end position="80"/>
    </location>
</feature>
<protein>
    <recommendedName>
        <fullName>Na(+)/H(+) antiporter subunit F1</fullName>
    </recommendedName>
    <alternativeName>
        <fullName>Mnh complex subunit F1</fullName>
    </alternativeName>
</protein>
<gene>
    <name type="primary">mnhF1</name>
    <name type="ordered locus">SAHV_0942</name>
</gene>